<proteinExistence type="inferred from homology"/>
<evidence type="ECO:0000250" key="1">
    <source>
        <dbReference type="UniProtKB" id="A0QS28"/>
    </source>
</evidence>
<evidence type="ECO:0000255" key="2">
    <source>
        <dbReference type="HAMAP-Rule" id="MF_01487"/>
    </source>
</evidence>
<evidence type="ECO:0000305" key="3"/>
<gene>
    <name evidence="2" type="primary">recD</name>
    <name type="ordered locus">MT0657</name>
</gene>
<dbReference type="EC" id="5.6.2.3" evidence="2"/>
<dbReference type="EMBL" id="AE000516">
    <property type="protein sequence ID" value="AAK44881.1"/>
    <property type="status" value="ALT_INIT"/>
    <property type="molecule type" value="Genomic_DNA"/>
</dbReference>
<dbReference type="PIR" id="B70612">
    <property type="entry name" value="B70612"/>
</dbReference>
<dbReference type="RefSeq" id="WP_003900979.1">
    <property type="nucleotide sequence ID" value="NZ_KK341227.1"/>
</dbReference>
<dbReference type="SMR" id="P9WHJ0"/>
<dbReference type="KEGG" id="mtc:MT0657"/>
<dbReference type="PATRIC" id="fig|83331.31.peg.697"/>
<dbReference type="HOGENOM" id="CLU_007524_1_3_11"/>
<dbReference type="Proteomes" id="UP000001020">
    <property type="component" value="Chromosome"/>
</dbReference>
<dbReference type="GO" id="GO:0009338">
    <property type="term" value="C:exodeoxyribonuclease V complex"/>
    <property type="evidence" value="ECO:0007669"/>
    <property type="project" value="InterPro"/>
</dbReference>
<dbReference type="GO" id="GO:0043139">
    <property type="term" value="F:5'-3' DNA helicase activity"/>
    <property type="evidence" value="ECO:0007669"/>
    <property type="project" value="UniProtKB-UniRule"/>
</dbReference>
<dbReference type="GO" id="GO:0005524">
    <property type="term" value="F:ATP binding"/>
    <property type="evidence" value="ECO:0007669"/>
    <property type="project" value="UniProtKB-UniRule"/>
</dbReference>
<dbReference type="GO" id="GO:0016887">
    <property type="term" value="F:ATP hydrolysis activity"/>
    <property type="evidence" value="ECO:0007669"/>
    <property type="project" value="RHEA"/>
</dbReference>
<dbReference type="GO" id="GO:0003677">
    <property type="term" value="F:DNA binding"/>
    <property type="evidence" value="ECO:0007669"/>
    <property type="project" value="UniProtKB-UniRule"/>
</dbReference>
<dbReference type="GO" id="GO:0008854">
    <property type="term" value="F:exodeoxyribonuclease V activity"/>
    <property type="evidence" value="ECO:0007669"/>
    <property type="project" value="UniProtKB-EC"/>
</dbReference>
<dbReference type="GO" id="GO:0017116">
    <property type="term" value="F:single-stranded DNA helicase activity"/>
    <property type="evidence" value="ECO:0007669"/>
    <property type="project" value="TreeGrafter"/>
</dbReference>
<dbReference type="GO" id="GO:0000724">
    <property type="term" value="P:double-strand break repair via homologous recombination"/>
    <property type="evidence" value="ECO:0007669"/>
    <property type="project" value="UniProtKB-UniRule"/>
</dbReference>
<dbReference type="CDD" id="cd17933">
    <property type="entry name" value="DEXSc_RecD-like"/>
    <property type="match status" value="1"/>
</dbReference>
<dbReference type="CDD" id="cd18809">
    <property type="entry name" value="SF1_C_RecD"/>
    <property type="match status" value="1"/>
</dbReference>
<dbReference type="FunFam" id="3.40.50.300:FF:002987">
    <property type="entry name" value="RecBCD enzyme subunit RecD"/>
    <property type="match status" value="1"/>
</dbReference>
<dbReference type="Gene3D" id="3.40.50.300">
    <property type="entry name" value="P-loop containing nucleotide triphosphate hydrolases"/>
    <property type="match status" value="3"/>
</dbReference>
<dbReference type="Gene3D" id="1.10.10.1020">
    <property type="entry name" value="RecBCD complex, subunit RecD, N-terminal domain"/>
    <property type="match status" value="1"/>
</dbReference>
<dbReference type="HAMAP" id="MF_01487">
    <property type="entry name" value="RecD"/>
    <property type="match status" value="1"/>
</dbReference>
<dbReference type="InterPro" id="IPR050534">
    <property type="entry name" value="Coronavir_polyprotein_1ab"/>
</dbReference>
<dbReference type="InterPro" id="IPR027417">
    <property type="entry name" value="P-loop_NTPase"/>
</dbReference>
<dbReference type="InterPro" id="IPR006344">
    <property type="entry name" value="RecD"/>
</dbReference>
<dbReference type="InterPro" id="IPR049550">
    <property type="entry name" value="RecD_N"/>
</dbReference>
<dbReference type="InterPro" id="IPR041851">
    <property type="entry name" value="RecD_N_sf"/>
</dbReference>
<dbReference type="InterPro" id="IPR027785">
    <property type="entry name" value="UvrD-like_helicase_C"/>
</dbReference>
<dbReference type="NCBIfam" id="TIGR01447">
    <property type="entry name" value="recD"/>
    <property type="match status" value="1"/>
</dbReference>
<dbReference type="PANTHER" id="PTHR43788:SF6">
    <property type="entry name" value="DNA HELICASE B"/>
    <property type="match status" value="1"/>
</dbReference>
<dbReference type="PANTHER" id="PTHR43788">
    <property type="entry name" value="DNA2/NAM7 HELICASE FAMILY MEMBER"/>
    <property type="match status" value="1"/>
</dbReference>
<dbReference type="Pfam" id="PF13245">
    <property type="entry name" value="AAA_19"/>
    <property type="match status" value="1"/>
</dbReference>
<dbReference type="Pfam" id="PF21185">
    <property type="entry name" value="RecD_N"/>
    <property type="match status" value="1"/>
</dbReference>
<dbReference type="Pfam" id="PF13538">
    <property type="entry name" value="UvrD_C_2"/>
    <property type="match status" value="1"/>
</dbReference>
<dbReference type="SUPFAM" id="SSF52540">
    <property type="entry name" value="P-loop containing nucleoside triphosphate hydrolases"/>
    <property type="match status" value="2"/>
</dbReference>
<comment type="function">
    <text evidence="1">A helicase/nuclease that prepares dsDNA breaks (DSB) for recombinational DNA repair. Binds to DSBs and unwinds DNA via a highly rapid and processive ATP-dependent bidirectional helicase activity. Holoenzyme degrades any linearized DNA that is unable to undergo homologous recombination. In the holoenzyme this subunit has ssDNA-dependent ATPase and 5'-3' helicase activity. When added to pre-assembled RecBC greatly stimulates nuclease activity and augments holoenzyme processivity. Unlike the case in E.coli, suppresses RecA-dependent homologous recombination, is instead required for single-strand annealing pathway repair of DSB.</text>
</comment>
<comment type="function">
    <text evidence="2">A helicase/nuclease that prepares dsDNA breaks (DSB) for recombinational DNA repair. Binds to DSBs and unwinds DNA via a highly rapid and processive ATP-dependent bidirectional helicase activity. Unwinds dsDNA until it encounters a Chi (crossover hotspot instigator) sequence from the 3' direction. Cuts ssDNA a few nucleotides 3' to the Chi site. The properties and activities of the enzyme are changed at Chi. The Chi-altered holoenzyme produces a long 3'-ssDNA overhang and facilitates RecA-binding to the ssDNA for homologous DNA recombination and repair. Holoenzyme degrades any linearized DNA that is unable to undergo homologous recombination. In the holoenzyme this subunit has ssDNA-dependent ATPase and 5'-3' helicase activity. When added to pre-assembled RecBC greatly stimulates nuclease activity and augments holoenzyme processivity. Negatively regulates the RecA-loading ability of RecBCD.</text>
</comment>
<comment type="catalytic activity">
    <reaction evidence="2">
        <text>Couples ATP hydrolysis with the unwinding of duplex DNA at the replication fork by translocating in the 5'-3' direction. This creates two antiparallel DNA single strands (ssDNA). The leading ssDNA polymer is the template for DNA polymerase III holoenzyme which synthesizes a continuous strand.</text>
        <dbReference type="EC" id="5.6.2.3"/>
    </reaction>
</comment>
<comment type="catalytic activity">
    <reaction evidence="2">
        <text>ATP + H2O = ADP + phosphate + H(+)</text>
        <dbReference type="Rhea" id="RHEA:13065"/>
        <dbReference type="ChEBI" id="CHEBI:15377"/>
        <dbReference type="ChEBI" id="CHEBI:15378"/>
        <dbReference type="ChEBI" id="CHEBI:30616"/>
        <dbReference type="ChEBI" id="CHEBI:43474"/>
        <dbReference type="ChEBI" id="CHEBI:456216"/>
        <dbReference type="EC" id="5.6.2.3"/>
    </reaction>
</comment>
<comment type="subunit">
    <text evidence="2">Heterotrimer of RecB, RecC and RecD. All subunits contribute to DNA-binding.</text>
</comment>
<comment type="miscellaneous">
    <text evidence="2">In the RecBCD complex, RecB has a slow 3'-5' helicase, an exonuclease activity and loads RecA onto ssDNA, RecD has a fast 5'-3' helicase activity, while RecC stimulates the ATPase and processivity of the RecB helicase and contributes to recognition of the Chi site.</text>
</comment>
<comment type="similarity">
    <text evidence="2">Belongs to the RecD family.</text>
</comment>
<comment type="sequence caution" evidence="3">
    <conflict type="erroneous initiation">
        <sequence resource="EMBL-CDS" id="AAK44881"/>
    </conflict>
    <text>Truncated N-terminus.</text>
</comment>
<protein>
    <recommendedName>
        <fullName evidence="2">RecBCD enzyme subunit RecD</fullName>
        <ecNumber evidence="2">5.6.2.3</ecNumber>
    </recommendedName>
    <alternativeName>
        <fullName evidence="2">DNA 5'-3' helicase subunit RecB</fullName>
    </alternativeName>
    <alternativeName>
        <fullName evidence="2">Exonuclease V subunit RecD</fullName>
        <shortName evidence="2">ExoV subunit RecD</shortName>
    </alternativeName>
    <alternativeName>
        <fullName evidence="2">Helicase/nuclease RecBCD subunit RecD</fullName>
    </alternativeName>
</protein>
<reference key="1">
    <citation type="journal article" date="2002" name="J. Bacteriol.">
        <title>Whole-genome comparison of Mycobacterium tuberculosis clinical and laboratory strains.</title>
        <authorList>
            <person name="Fleischmann R.D."/>
            <person name="Alland D."/>
            <person name="Eisen J.A."/>
            <person name="Carpenter L."/>
            <person name="White O."/>
            <person name="Peterson J.D."/>
            <person name="DeBoy R.T."/>
            <person name="Dodson R.J."/>
            <person name="Gwinn M.L."/>
            <person name="Haft D.H."/>
            <person name="Hickey E.K."/>
            <person name="Kolonay J.F."/>
            <person name="Nelson W.C."/>
            <person name="Umayam L.A."/>
            <person name="Ermolaeva M.D."/>
            <person name="Salzberg S.L."/>
            <person name="Delcher A."/>
            <person name="Utterback T.R."/>
            <person name="Weidman J.F."/>
            <person name="Khouri H.M."/>
            <person name="Gill J."/>
            <person name="Mikula A."/>
            <person name="Bishai W."/>
            <person name="Jacobs W.R. Jr."/>
            <person name="Venter J.C."/>
            <person name="Fraser C.M."/>
        </authorList>
    </citation>
    <scope>NUCLEOTIDE SEQUENCE [LARGE SCALE GENOMIC DNA]</scope>
    <source>
        <strain>CDC 1551 / Oshkosh</strain>
    </source>
</reference>
<name>RECD_MYCTO</name>
<sequence length="575" mass="61747">MKLTDVDFAVEASGMVRAFNQAGVLDVSDVHVAQRLCALAGESDERVALAVAVAVRALRAGSVCVDLLSIARVAGHDDLPWPDPADWLAAVRASPLLADPPVLHLYDDRLLYLDRYWREEEQVCADLLALLTSRRPAGVPDLRRLFPTGFDEQRRAAEIALSQGVTVLTGGPGTGKTTTVARLLALVAEQAELAGEPRPRIALAAPTGKAAARLAEAVRREMAKLDATDRARLGDLHAVTLHRLLGAKPGARFRQDRQNRLPHNVIVVDETSMVSLTLMARLAEAVRPGARLILVGDADQLASVEAGAVLADLVDGFSVRDDALVAQLRTSHRFGKVIGTLAEAIRAGDGDAVLGLLRSGEERIEFVDDEDPAPRLRAVLVPHALRLREAALLGASDVALATLDEHRLLCAHRDGPTGVLHWNRRVQAWLAEETGQPPWTPWYAGRPLLVTANDYGLRVYNGDTGVVLAGPTGLRAVISGASGPLDVATGRLGDVETMHAMTIHKSQGSQVDEVTVLMPQEDSRLLTRELLYTAVTRAKRKVRVVGSEASVRAAIARRAVRASGLRMRLQSTGCG</sequence>
<keyword id="KW-0067">ATP-binding</keyword>
<keyword id="KW-0227">DNA damage</keyword>
<keyword id="KW-0234">DNA repair</keyword>
<keyword id="KW-0238">DNA-binding</keyword>
<keyword id="KW-0269">Exonuclease</keyword>
<keyword id="KW-0347">Helicase</keyword>
<keyword id="KW-0378">Hydrolase</keyword>
<keyword id="KW-0413">Isomerase</keyword>
<keyword id="KW-0540">Nuclease</keyword>
<keyword id="KW-0547">Nucleotide-binding</keyword>
<keyword id="KW-1185">Reference proteome</keyword>
<accession>P9WHJ0</accession>
<accession>L0T4A3</accession>
<accession>P96919</accession>
<accession>Q7D9I4</accession>
<organism>
    <name type="scientific">Mycobacterium tuberculosis (strain CDC 1551 / Oshkosh)</name>
    <dbReference type="NCBI Taxonomy" id="83331"/>
    <lineage>
        <taxon>Bacteria</taxon>
        <taxon>Bacillati</taxon>
        <taxon>Actinomycetota</taxon>
        <taxon>Actinomycetes</taxon>
        <taxon>Mycobacteriales</taxon>
        <taxon>Mycobacteriaceae</taxon>
        <taxon>Mycobacterium</taxon>
        <taxon>Mycobacterium tuberculosis complex</taxon>
    </lineage>
</organism>
<feature type="chain" id="PRO_0000428178" description="RecBCD enzyme subunit RecD">
    <location>
        <begin position="1"/>
        <end position="575"/>
    </location>
</feature>
<feature type="binding site" evidence="2">
    <location>
        <begin position="170"/>
        <end position="177"/>
    </location>
    <ligand>
        <name>ATP</name>
        <dbReference type="ChEBI" id="CHEBI:30616"/>
    </ligand>
</feature>